<gene>
    <name evidence="1" type="primary">rpoZ</name>
    <name type="ordered locus">RrIowa_1049</name>
</gene>
<feature type="chain" id="PRO_1000079641" description="DNA-directed RNA polymerase subunit omega">
    <location>
        <begin position="1"/>
        <end position="127"/>
    </location>
</feature>
<dbReference type="EC" id="2.7.7.6" evidence="1"/>
<dbReference type="EMBL" id="CP000766">
    <property type="protein sequence ID" value="ABY72851.1"/>
    <property type="molecule type" value="Genomic_DNA"/>
</dbReference>
<dbReference type="RefSeq" id="WP_012151045.1">
    <property type="nucleotide sequence ID" value="NC_010263.3"/>
</dbReference>
<dbReference type="SMR" id="B0BYC5"/>
<dbReference type="GeneID" id="79937565"/>
<dbReference type="KEGG" id="rrj:RrIowa_1049"/>
<dbReference type="eggNOG" id="COG1758">
    <property type="taxonomic scope" value="Bacteria"/>
</dbReference>
<dbReference type="HOGENOM" id="CLU_138545_0_0_5"/>
<dbReference type="Proteomes" id="UP000000796">
    <property type="component" value="Chromosome"/>
</dbReference>
<dbReference type="GO" id="GO:0000428">
    <property type="term" value="C:DNA-directed RNA polymerase complex"/>
    <property type="evidence" value="ECO:0007669"/>
    <property type="project" value="UniProtKB-KW"/>
</dbReference>
<dbReference type="GO" id="GO:0003677">
    <property type="term" value="F:DNA binding"/>
    <property type="evidence" value="ECO:0007669"/>
    <property type="project" value="UniProtKB-UniRule"/>
</dbReference>
<dbReference type="GO" id="GO:0003899">
    <property type="term" value="F:DNA-directed RNA polymerase activity"/>
    <property type="evidence" value="ECO:0007669"/>
    <property type="project" value="UniProtKB-UniRule"/>
</dbReference>
<dbReference type="GO" id="GO:0006351">
    <property type="term" value="P:DNA-templated transcription"/>
    <property type="evidence" value="ECO:0007669"/>
    <property type="project" value="UniProtKB-UniRule"/>
</dbReference>
<dbReference type="Gene3D" id="3.90.940.10">
    <property type="match status" value="1"/>
</dbReference>
<dbReference type="HAMAP" id="MF_00366">
    <property type="entry name" value="RNApol_bact_RpoZ"/>
    <property type="match status" value="1"/>
</dbReference>
<dbReference type="InterPro" id="IPR003716">
    <property type="entry name" value="DNA-dir_RNA_pol_omega"/>
</dbReference>
<dbReference type="InterPro" id="IPR006110">
    <property type="entry name" value="Pol_omega/Rpo6/RPB6"/>
</dbReference>
<dbReference type="InterPro" id="IPR036161">
    <property type="entry name" value="RPB6/omega-like_sf"/>
</dbReference>
<dbReference type="NCBIfam" id="TIGR00690">
    <property type="entry name" value="rpoZ"/>
    <property type="match status" value="1"/>
</dbReference>
<dbReference type="PANTHER" id="PTHR34476">
    <property type="entry name" value="DNA-DIRECTED RNA POLYMERASE SUBUNIT OMEGA"/>
    <property type="match status" value="1"/>
</dbReference>
<dbReference type="PANTHER" id="PTHR34476:SF1">
    <property type="entry name" value="DNA-DIRECTED RNA POLYMERASE SUBUNIT OMEGA"/>
    <property type="match status" value="1"/>
</dbReference>
<dbReference type="Pfam" id="PF01192">
    <property type="entry name" value="RNA_pol_Rpb6"/>
    <property type="match status" value="1"/>
</dbReference>
<dbReference type="SMART" id="SM01409">
    <property type="entry name" value="RNA_pol_Rpb6"/>
    <property type="match status" value="1"/>
</dbReference>
<dbReference type="SUPFAM" id="SSF63562">
    <property type="entry name" value="RPB6/omega subunit-like"/>
    <property type="match status" value="1"/>
</dbReference>
<accession>B0BYC5</accession>
<reference key="1">
    <citation type="journal article" date="2008" name="Infect. Immun.">
        <title>Genomic comparison of virulent Rickettsia rickettsii Sheila Smith and avirulent Rickettsia rickettsii Iowa.</title>
        <authorList>
            <person name="Ellison D.W."/>
            <person name="Clark T.R."/>
            <person name="Sturdevant D.E."/>
            <person name="Virtaneva K."/>
            <person name="Porcella S.F."/>
            <person name="Hackstadt T."/>
        </authorList>
    </citation>
    <scope>NUCLEOTIDE SEQUENCE [LARGE SCALE GENOMIC DNA]</scope>
    <source>
        <strain>Iowa</strain>
    </source>
</reference>
<keyword id="KW-0240">DNA-directed RNA polymerase</keyword>
<keyword id="KW-0548">Nucleotidyltransferase</keyword>
<keyword id="KW-0804">Transcription</keyword>
<keyword id="KW-0808">Transferase</keyword>
<comment type="function">
    <text evidence="1">Promotes RNA polymerase assembly. Latches the N- and C-terminal regions of the beta' subunit thereby facilitating its interaction with the beta and alpha subunits.</text>
</comment>
<comment type="catalytic activity">
    <reaction evidence="1">
        <text>RNA(n) + a ribonucleoside 5'-triphosphate = RNA(n+1) + diphosphate</text>
        <dbReference type="Rhea" id="RHEA:21248"/>
        <dbReference type="Rhea" id="RHEA-COMP:14527"/>
        <dbReference type="Rhea" id="RHEA-COMP:17342"/>
        <dbReference type="ChEBI" id="CHEBI:33019"/>
        <dbReference type="ChEBI" id="CHEBI:61557"/>
        <dbReference type="ChEBI" id="CHEBI:140395"/>
        <dbReference type="EC" id="2.7.7.6"/>
    </reaction>
</comment>
<comment type="subunit">
    <text evidence="1">The RNAP catalytic core consists of 2 alpha, 1 beta, 1 beta' and 1 omega subunit. When a sigma factor is associated with the core the holoenzyme is formed, which can initiate transcription.</text>
</comment>
<comment type="similarity">
    <text evidence="1">Belongs to the RNA polymerase subunit omega family.</text>
</comment>
<proteinExistence type="inferred from homology"/>
<protein>
    <recommendedName>
        <fullName evidence="1">DNA-directed RNA polymerase subunit omega</fullName>
        <shortName evidence="1">RNAP omega subunit</shortName>
        <ecNumber evidence="1">2.7.7.6</ecNumber>
    </recommendedName>
    <alternativeName>
        <fullName evidence="1">RNA polymerase omega subunit</fullName>
    </alternativeName>
    <alternativeName>
        <fullName evidence="1">Transcriptase subunit omega</fullName>
    </alternativeName>
</protein>
<evidence type="ECO:0000255" key="1">
    <source>
        <dbReference type="HAMAP-Rule" id="MF_00366"/>
    </source>
</evidence>
<organism>
    <name type="scientific">Rickettsia rickettsii (strain Iowa)</name>
    <dbReference type="NCBI Taxonomy" id="452659"/>
    <lineage>
        <taxon>Bacteria</taxon>
        <taxon>Pseudomonadati</taxon>
        <taxon>Pseudomonadota</taxon>
        <taxon>Alphaproteobacteria</taxon>
        <taxon>Rickettsiales</taxon>
        <taxon>Rickettsiaceae</taxon>
        <taxon>Rickettsieae</taxon>
        <taxon>Rickettsia</taxon>
        <taxon>spotted fever group</taxon>
    </lineage>
</organism>
<name>RPOZ_RICRO</name>
<sequence>MARITAEDCNKIIPDRFRLVVLATRYAKLLNYKVETNHIKKEKLDKPPVIALRRIAAGKVSVAQLEQDLINSLRTRTMIEPLVNQDESEAVEEKFEYLPEVYIGEDYSDLDDQIFIDEHGEDYETDK</sequence>